<keyword id="KW-0067">ATP-binding</keyword>
<keyword id="KW-0436">Ligase</keyword>
<keyword id="KW-0460">Magnesium</keyword>
<keyword id="KW-0479">Metal-binding</keyword>
<keyword id="KW-0547">Nucleotide-binding</keyword>
<keyword id="KW-1185">Reference proteome</keyword>
<protein>
    <recommendedName>
        <fullName>Acetyl-coenzyme A synthetase</fullName>
        <shortName>AcCoA synthetase</shortName>
        <shortName>Acs</shortName>
        <ecNumber>6.2.1.1</ecNumber>
    </recommendedName>
    <alternativeName>
        <fullName>Acetate--CoA ligase</fullName>
    </alternativeName>
    <alternativeName>
        <fullName>Acyl-activating enzyme</fullName>
    </alternativeName>
</protein>
<sequence length="659" mass="74109">MAETAKTAVLQEETRIFNTPQWIIEYSNSYQWMKKKGFKTEKEMREWCAQNYLDFWDEMAQTYADWFKPYTQILEWNPPYAKWFLGGKCNVAHNAVDRHAKSWRRNKVAYYFVGEPVGDTKTITYYQLYQAVNKMANGLKSLGVKKGDRVSIYLPMIPELPITMLACAKIGAIHSVVFSGFSAGGLQSRVTDAEAKVVVTSDGFYRRGKPLPLKPNVDEAVQNAPSVEKVVVVKRVGLDVPMKEGRDIWYHDLVKDQPAECYTEELDPEDRLFILYTSGTTGKPKGIEHAHGGFCVGPAYTTAWALDVHEEDVYWCTADCGWITGHSYVVYGPLCLGATSILYEGAPDYPDIGRWWSIIEEYGVSVFYTAPTAIRMFMKAGDQWPKKYNLKSIRILASVGEPLNPEAYVWFRNNIGGGQAPIIDTWWQTETGCHVIAPLPMTPEKPGSVAFPLPGFNTDIYDEDGNSVPLGYGGNIVQKTPWPSMLRAFFRDPERYMKEYWQMYWDIKPGTYLAGDKATRDKDGYWWIQGRIDDVLKVAGHRISNAEVESAAVSHPAVAEAAVIGKPDEVKGEVIVAFIILKEGVQESEDLKKDIAKHVRSVLGPVAYPEIVYFVKDVPKTRSGKIMRRVIKAKALGKPVGDISALANPESVENIPLIV</sequence>
<organism>
    <name type="scientific">Methanothrix thermoacetophila (strain DSM 6194 / JCM 14653 / NBRC 101360 / PT)</name>
    <name type="common">Methanosaeta thermophila</name>
    <dbReference type="NCBI Taxonomy" id="349307"/>
    <lineage>
        <taxon>Archaea</taxon>
        <taxon>Methanobacteriati</taxon>
        <taxon>Methanobacteriota</taxon>
        <taxon>Stenosarchaea group</taxon>
        <taxon>Methanomicrobia</taxon>
        <taxon>Methanotrichales</taxon>
        <taxon>Methanotrichaceae</taxon>
        <taxon>Methanothrix</taxon>
    </lineage>
</organism>
<evidence type="ECO:0000250" key="1"/>
<evidence type="ECO:0000269" key="2">
    <source>
    </source>
</evidence>
<evidence type="ECO:0000305" key="3"/>
<accession>A0B8F1</accession>
<name>ACSA_METTP</name>
<proteinExistence type="evidence at protein level"/>
<dbReference type="EC" id="6.2.1.1"/>
<dbReference type="EMBL" id="CP000477">
    <property type="protein sequence ID" value="ABK14975.1"/>
    <property type="molecule type" value="Genomic_DNA"/>
</dbReference>
<dbReference type="RefSeq" id="WP_011696367.1">
    <property type="nucleotide sequence ID" value="NC_008553.1"/>
</dbReference>
<dbReference type="SMR" id="A0B8F1"/>
<dbReference type="STRING" id="349307.Mthe_1194"/>
<dbReference type="GeneID" id="4462239"/>
<dbReference type="KEGG" id="mtp:Mthe_1194"/>
<dbReference type="HOGENOM" id="CLU_000022_3_6_2"/>
<dbReference type="OrthoDB" id="371752at2157"/>
<dbReference type="BRENDA" id="6.2.1.1">
    <property type="organism ID" value="11925"/>
</dbReference>
<dbReference type="SABIO-RK" id="A0B8F1"/>
<dbReference type="Proteomes" id="UP000000674">
    <property type="component" value="Chromosome"/>
</dbReference>
<dbReference type="GO" id="GO:0003987">
    <property type="term" value="F:acetate-CoA ligase activity"/>
    <property type="evidence" value="ECO:0007669"/>
    <property type="project" value="UniProtKB-EC"/>
</dbReference>
<dbReference type="GO" id="GO:0016208">
    <property type="term" value="F:AMP binding"/>
    <property type="evidence" value="ECO:0007669"/>
    <property type="project" value="InterPro"/>
</dbReference>
<dbReference type="GO" id="GO:0005524">
    <property type="term" value="F:ATP binding"/>
    <property type="evidence" value="ECO:0007669"/>
    <property type="project" value="UniProtKB-KW"/>
</dbReference>
<dbReference type="GO" id="GO:0046872">
    <property type="term" value="F:metal ion binding"/>
    <property type="evidence" value="ECO:0007669"/>
    <property type="project" value="UniProtKB-KW"/>
</dbReference>
<dbReference type="GO" id="GO:0019427">
    <property type="term" value="P:acetyl-CoA biosynthetic process from acetate"/>
    <property type="evidence" value="ECO:0007669"/>
    <property type="project" value="InterPro"/>
</dbReference>
<dbReference type="CDD" id="cd05966">
    <property type="entry name" value="ACS"/>
    <property type="match status" value="1"/>
</dbReference>
<dbReference type="FunFam" id="3.40.50.12780:FF:000001">
    <property type="entry name" value="Acetyl-coenzyme A synthetase"/>
    <property type="match status" value="1"/>
</dbReference>
<dbReference type="Gene3D" id="3.30.300.30">
    <property type="match status" value="1"/>
</dbReference>
<dbReference type="Gene3D" id="3.40.50.12780">
    <property type="entry name" value="N-terminal domain of ligase-like"/>
    <property type="match status" value="1"/>
</dbReference>
<dbReference type="InterPro" id="IPR011904">
    <property type="entry name" value="Ac_CoA_lig"/>
</dbReference>
<dbReference type="InterPro" id="IPR032387">
    <property type="entry name" value="ACAS_N"/>
</dbReference>
<dbReference type="InterPro" id="IPR025110">
    <property type="entry name" value="AMP-bd_C"/>
</dbReference>
<dbReference type="InterPro" id="IPR045851">
    <property type="entry name" value="AMP-bd_C_sf"/>
</dbReference>
<dbReference type="InterPro" id="IPR020845">
    <property type="entry name" value="AMP-binding_CS"/>
</dbReference>
<dbReference type="InterPro" id="IPR000873">
    <property type="entry name" value="AMP-dep_synth/lig_dom"/>
</dbReference>
<dbReference type="InterPro" id="IPR042099">
    <property type="entry name" value="ANL_N_sf"/>
</dbReference>
<dbReference type="NCBIfam" id="TIGR02188">
    <property type="entry name" value="Ac_CoA_lig_AcsA"/>
    <property type="match status" value="1"/>
</dbReference>
<dbReference type="NCBIfam" id="NF001208">
    <property type="entry name" value="PRK00174.1"/>
    <property type="match status" value="1"/>
</dbReference>
<dbReference type="PANTHER" id="PTHR24095">
    <property type="entry name" value="ACETYL-COENZYME A SYNTHETASE"/>
    <property type="match status" value="1"/>
</dbReference>
<dbReference type="PANTHER" id="PTHR24095:SF14">
    <property type="entry name" value="ACETYL-COENZYME A SYNTHETASE 1"/>
    <property type="match status" value="1"/>
</dbReference>
<dbReference type="Pfam" id="PF16177">
    <property type="entry name" value="ACAS_N"/>
    <property type="match status" value="1"/>
</dbReference>
<dbReference type="Pfam" id="PF00501">
    <property type="entry name" value="AMP-binding"/>
    <property type="match status" value="1"/>
</dbReference>
<dbReference type="Pfam" id="PF13193">
    <property type="entry name" value="AMP-binding_C"/>
    <property type="match status" value="1"/>
</dbReference>
<dbReference type="SUPFAM" id="SSF56801">
    <property type="entry name" value="Acetyl-CoA synthetase-like"/>
    <property type="match status" value="1"/>
</dbReference>
<dbReference type="PROSITE" id="PS00455">
    <property type="entry name" value="AMP_BINDING"/>
    <property type="match status" value="1"/>
</dbReference>
<comment type="function">
    <text evidence="2">Catalyzes the conversion of acetate into acetyl-CoA (AcCoA), an essential intermediate at the junction of anabolic and catabolic pathways. AcsA undergoes a two-step reaction. In the first half reaction, AcsA combines acetate with ATP to form acetyl-adenylate (AcAMP) intermediate. In the second half reaction, it can then transfer the acetyl group from AcAMP to the sulfhydryl group of CoA, forming the product AcCoA.</text>
</comment>
<comment type="catalytic activity">
    <reaction evidence="2">
        <text>acetate + ATP + CoA = acetyl-CoA + AMP + diphosphate</text>
        <dbReference type="Rhea" id="RHEA:23176"/>
        <dbReference type="ChEBI" id="CHEBI:30089"/>
        <dbReference type="ChEBI" id="CHEBI:30616"/>
        <dbReference type="ChEBI" id="CHEBI:33019"/>
        <dbReference type="ChEBI" id="CHEBI:57287"/>
        <dbReference type="ChEBI" id="CHEBI:57288"/>
        <dbReference type="ChEBI" id="CHEBI:456215"/>
        <dbReference type="EC" id="6.2.1.1"/>
    </reaction>
</comment>
<comment type="cofactor">
    <cofactor evidence="1">
        <name>Mg(2+)</name>
        <dbReference type="ChEBI" id="CHEBI:18420"/>
    </cofactor>
</comment>
<comment type="similarity">
    <text evidence="3">Belongs to the ATP-dependent AMP-binding enzyme family.</text>
</comment>
<reference key="1">
    <citation type="submission" date="2006-10" db="EMBL/GenBank/DDBJ databases">
        <title>Complete sequence of Methanosaeta thermophila PT.</title>
        <authorList>
            <consortium name="US DOE Joint Genome Institute"/>
            <person name="Copeland A."/>
            <person name="Lucas S."/>
            <person name="Lapidus A."/>
            <person name="Barry K."/>
            <person name="Detter J.C."/>
            <person name="Glavina del Rio T."/>
            <person name="Hammon N."/>
            <person name="Israni S."/>
            <person name="Pitluck S."/>
            <person name="Chain P."/>
            <person name="Malfatti S."/>
            <person name="Shin M."/>
            <person name="Vergez L."/>
            <person name="Schmutz J."/>
            <person name="Larimer F."/>
            <person name="Land M."/>
            <person name="Hauser L."/>
            <person name="Kyrpides N."/>
            <person name="Kim E."/>
            <person name="Smith K.S."/>
            <person name="Ingram-Smith C."/>
            <person name="Richardson P."/>
        </authorList>
    </citation>
    <scope>NUCLEOTIDE SEQUENCE [LARGE SCALE GENOMIC DNA]</scope>
    <source>
        <strain>DSM 6194 / JCM 14653 / NBRC 101360 / PT</strain>
    </source>
</reference>
<reference key="2">
    <citation type="journal article" date="2012" name="Archaea">
        <title>Acetate activation in Methanosaeta thermophila: characterization of the key enzymes pyrophosphatase and acetyl-CoA synthetase.</title>
        <authorList>
            <person name="Berger S."/>
            <person name="Welte C."/>
            <person name="Deppenmeier U."/>
        </authorList>
    </citation>
    <scope>FUNCTION</scope>
    <scope>CATALYTIC ACTIVITY</scope>
    <source>
        <strain>DSM 6194 / JCM 14653 / NBRC 101360 / PT</strain>
    </source>
</reference>
<gene>
    <name type="primary">acsA</name>
    <name type="synonym">acs</name>
    <name type="ordered locus">Mthe_1194</name>
</gene>
<feature type="chain" id="PRO_0000429050" description="Acetyl-coenzyme A synthetase">
    <location>
        <begin position="1"/>
        <end position="659"/>
    </location>
</feature>
<feature type="binding site" evidence="1">
    <location>
        <begin position="206"/>
        <end position="209"/>
    </location>
    <ligand>
        <name>CoA</name>
        <dbReference type="ChEBI" id="CHEBI:57287"/>
    </ligand>
</feature>
<feature type="binding site" evidence="1">
    <location>
        <position position="324"/>
    </location>
    <ligand>
        <name>CoA</name>
        <dbReference type="ChEBI" id="CHEBI:57287"/>
    </ligand>
</feature>
<feature type="binding site" evidence="1">
    <location>
        <begin position="400"/>
        <end position="402"/>
    </location>
    <ligand>
        <name>ATP</name>
        <dbReference type="ChEBI" id="CHEBI:30616"/>
    </ligand>
</feature>
<feature type="binding site" evidence="1">
    <location>
        <begin position="424"/>
        <end position="429"/>
    </location>
    <ligand>
        <name>ATP</name>
        <dbReference type="ChEBI" id="CHEBI:30616"/>
    </ligand>
</feature>
<feature type="binding site" evidence="1">
    <location>
        <position position="516"/>
    </location>
    <ligand>
        <name>ATP</name>
        <dbReference type="ChEBI" id="CHEBI:30616"/>
    </ligand>
</feature>
<feature type="binding site" evidence="1">
    <location>
        <position position="531"/>
    </location>
    <ligand>
        <name>ATP</name>
        <dbReference type="ChEBI" id="CHEBI:30616"/>
    </ligand>
</feature>
<feature type="binding site" evidence="1">
    <location>
        <position position="542"/>
    </location>
    <ligand>
        <name>ATP</name>
        <dbReference type="ChEBI" id="CHEBI:30616"/>
    </ligand>
</feature>
<feature type="binding site" evidence="1">
    <location>
        <position position="553"/>
    </location>
    <ligand>
        <name>Mg(2+)</name>
        <dbReference type="ChEBI" id="CHEBI:18420"/>
    </ligand>
</feature>
<feature type="binding site" evidence="1">
    <location>
        <position position="555"/>
    </location>
    <ligand>
        <name>Mg(2+)</name>
        <dbReference type="ChEBI" id="CHEBI:18420"/>
    </ligand>
</feature>
<feature type="binding site" evidence="1">
    <location>
        <position position="600"/>
    </location>
    <ligand>
        <name>CoA</name>
        <dbReference type="ChEBI" id="CHEBI:57287"/>
    </ligand>
</feature>